<feature type="signal peptide" evidence="1">
    <location>
        <begin position="1"/>
        <end position="22"/>
    </location>
</feature>
<feature type="chain" id="PRO_0000278535" description="Uncharacterized lipoprotein SAR0402">
    <location>
        <begin position="23"/>
        <end position="265"/>
    </location>
</feature>
<feature type="lipid moiety-binding region" description="N-palmitoyl cysteine" evidence="1">
    <location>
        <position position="23"/>
    </location>
</feature>
<feature type="lipid moiety-binding region" description="S-diacylglycerol cysteine" evidence="1">
    <location>
        <position position="23"/>
    </location>
</feature>
<gene>
    <name type="ordered locus">SAS0402</name>
</gene>
<keyword id="KW-1003">Cell membrane</keyword>
<keyword id="KW-0449">Lipoprotein</keyword>
<keyword id="KW-0472">Membrane</keyword>
<keyword id="KW-0564">Palmitate</keyword>
<keyword id="KW-0732">Signal</keyword>
<protein>
    <recommendedName>
        <fullName>Uncharacterized lipoprotein SAR0402</fullName>
    </recommendedName>
</protein>
<organism>
    <name type="scientific">Staphylococcus aureus (strain MSSA476)</name>
    <dbReference type="NCBI Taxonomy" id="282459"/>
    <lineage>
        <taxon>Bacteria</taxon>
        <taxon>Bacillati</taxon>
        <taxon>Bacillota</taxon>
        <taxon>Bacilli</taxon>
        <taxon>Bacillales</taxon>
        <taxon>Staphylococcaceae</taxon>
        <taxon>Staphylococcus</taxon>
    </lineage>
</organism>
<comment type="subcellular location">
    <subcellularLocation>
        <location evidence="1">Cell membrane</location>
        <topology evidence="1">Lipid-anchor</topology>
    </subcellularLocation>
</comment>
<comment type="similarity">
    <text evidence="2">Belongs to the staphylococcal tandem lipoprotein family.</text>
</comment>
<accession>Q6GC45</accession>
<evidence type="ECO:0000255" key="1">
    <source>
        <dbReference type="PROSITE-ProRule" id="PRU00303"/>
    </source>
</evidence>
<evidence type="ECO:0000305" key="2"/>
<dbReference type="EMBL" id="BX571857">
    <property type="protein sequence ID" value="CAG42175.1"/>
    <property type="molecule type" value="Genomic_DNA"/>
</dbReference>
<dbReference type="RefSeq" id="WP_000540315.1">
    <property type="nucleotide sequence ID" value="NC_002953.3"/>
</dbReference>
<dbReference type="SMR" id="Q6GC45"/>
<dbReference type="KEGG" id="sas:SAS0402"/>
<dbReference type="HOGENOM" id="CLU_071589_0_1_9"/>
<dbReference type="GO" id="GO:0005886">
    <property type="term" value="C:plasma membrane"/>
    <property type="evidence" value="ECO:0007669"/>
    <property type="project" value="UniProtKB-SubCell"/>
</dbReference>
<dbReference type="Gene3D" id="2.50.20.40">
    <property type="match status" value="1"/>
</dbReference>
<dbReference type="InterPro" id="IPR007595">
    <property type="entry name" value="Csa"/>
</dbReference>
<dbReference type="InterPro" id="IPR038641">
    <property type="entry name" value="Csa_sf"/>
</dbReference>
<dbReference type="NCBIfam" id="TIGR01742">
    <property type="entry name" value="SA_tandem_lipo"/>
    <property type="match status" value="1"/>
</dbReference>
<dbReference type="Pfam" id="PF04507">
    <property type="entry name" value="DUF576"/>
    <property type="match status" value="1"/>
</dbReference>
<dbReference type="PROSITE" id="PS51257">
    <property type="entry name" value="PROKAR_LIPOPROTEIN"/>
    <property type="match status" value="1"/>
</dbReference>
<sequence>MGYFKRVLLYIIVMVLSVFIIGCDKSSDTSEKSKGDSKEAQIKKSFAKTLDMYPTENLEDFYDKEGYRDGKFKKGDKGTWVIRSEMTTELKNENMVSKGMVIRLNRNSRTCTGEYFVRIVKEDSEGKVYSDERKYPVKMENNKIIPLKPIDDEKVKKEIEEFKFFVQYGNFKELENYKDGEVTYNPEAPIYSAQYQLKNSDYNVEQLRKRYNIPTQKAPKLLLKGSGNLKGSSVGYKNIEFTFVENKEENIYFTDSVYFNPSEDK</sequence>
<reference key="1">
    <citation type="journal article" date="2004" name="Proc. Natl. Acad. Sci. U.S.A.">
        <title>Complete genomes of two clinical Staphylococcus aureus strains: evidence for the rapid evolution of virulence and drug resistance.</title>
        <authorList>
            <person name="Holden M.T.G."/>
            <person name="Feil E.J."/>
            <person name="Lindsay J.A."/>
            <person name="Peacock S.J."/>
            <person name="Day N.P.J."/>
            <person name="Enright M.C."/>
            <person name="Foster T.J."/>
            <person name="Moore C.E."/>
            <person name="Hurst L."/>
            <person name="Atkin R."/>
            <person name="Barron A."/>
            <person name="Bason N."/>
            <person name="Bentley S.D."/>
            <person name="Chillingworth C."/>
            <person name="Chillingworth T."/>
            <person name="Churcher C."/>
            <person name="Clark L."/>
            <person name="Corton C."/>
            <person name="Cronin A."/>
            <person name="Doggett J."/>
            <person name="Dowd L."/>
            <person name="Feltwell T."/>
            <person name="Hance Z."/>
            <person name="Harris B."/>
            <person name="Hauser H."/>
            <person name="Holroyd S."/>
            <person name="Jagels K."/>
            <person name="James K.D."/>
            <person name="Lennard N."/>
            <person name="Line A."/>
            <person name="Mayes R."/>
            <person name="Moule S."/>
            <person name="Mungall K."/>
            <person name="Ormond D."/>
            <person name="Quail M.A."/>
            <person name="Rabbinowitsch E."/>
            <person name="Rutherford K.M."/>
            <person name="Sanders M."/>
            <person name="Sharp S."/>
            <person name="Simmonds M."/>
            <person name="Stevens K."/>
            <person name="Whitehead S."/>
            <person name="Barrell B.G."/>
            <person name="Spratt B.G."/>
            <person name="Parkhill J."/>
        </authorList>
    </citation>
    <scope>NUCLEOTIDE SEQUENCE [LARGE SCALE GENOMIC DNA]</scope>
    <source>
        <strain>MSSA476</strain>
    </source>
</reference>
<proteinExistence type="inferred from homology"/>
<name>Y402_STAAS</name>